<feature type="chain" id="PRO_0000369493" description="Non-structural glycoprotein 4">
    <location>
        <begin position="1"/>
        <end position="175"/>
    </location>
</feature>
<feature type="topological domain" description="Lumenal" evidence="1">
    <location>
        <begin position="1"/>
        <end position="28"/>
    </location>
</feature>
<feature type="transmembrane region" description="Helical; Signal-anchor for type III membrane protein" evidence="1">
    <location>
        <begin position="29"/>
        <end position="51"/>
    </location>
</feature>
<feature type="topological domain" description="Cytoplasmic" evidence="1">
    <location>
        <begin position="52"/>
        <end position="175"/>
    </location>
</feature>
<feature type="binding site" evidence="1">
    <location>
        <position position="120"/>
    </location>
    <ligand>
        <name>Ca(2+)</name>
        <dbReference type="ChEBI" id="CHEBI:29108"/>
    </ligand>
</feature>
<feature type="binding site" evidence="1">
    <location>
        <position position="123"/>
    </location>
    <ligand>
        <name>Ca(2+)</name>
        <dbReference type="ChEBI" id="CHEBI:29108"/>
    </ligand>
</feature>
<feature type="glycosylation site" description="N-linked (GlcNAc...) asparagine; by host" evidence="1">
    <location>
        <position position="8"/>
    </location>
</feature>
<feature type="glycosylation site" description="N-linked (GlcNAc...) asparagine; by host" evidence="1">
    <location>
        <position position="18"/>
    </location>
</feature>
<dbReference type="EMBL" id="AF144792">
    <property type="protein sequence ID" value="AAD50667.1"/>
    <property type="molecule type" value="Genomic_RNA"/>
</dbReference>
<dbReference type="SMR" id="Q77Q91"/>
<dbReference type="GO" id="GO:0005576">
    <property type="term" value="C:extracellular region"/>
    <property type="evidence" value="ECO:0007669"/>
    <property type="project" value="UniProtKB-SubCell"/>
</dbReference>
<dbReference type="GO" id="GO:0044155">
    <property type="term" value="C:host caveola"/>
    <property type="evidence" value="ECO:0007669"/>
    <property type="project" value="UniProtKB-SubCell"/>
</dbReference>
<dbReference type="GO" id="GO:0044169">
    <property type="term" value="C:host cell rough endoplasmic reticulum membrane"/>
    <property type="evidence" value="ECO:0007669"/>
    <property type="project" value="UniProtKB-SubCell"/>
</dbReference>
<dbReference type="GO" id="GO:0016020">
    <property type="term" value="C:membrane"/>
    <property type="evidence" value="ECO:0007669"/>
    <property type="project" value="UniProtKB-UniRule"/>
</dbReference>
<dbReference type="GO" id="GO:0015267">
    <property type="term" value="F:channel activity"/>
    <property type="evidence" value="ECO:0007669"/>
    <property type="project" value="UniProtKB-KW"/>
</dbReference>
<dbReference type="GO" id="GO:0046872">
    <property type="term" value="F:metal ion binding"/>
    <property type="evidence" value="ECO:0007669"/>
    <property type="project" value="UniProtKB-UniRule"/>
</dbReference>
<dbReference type="GO" id="GO:0090729">
    <property type="term" value="F:toxin activity"/>
    <property type="evidence" value="ECO:0007669"/>
    <property type="project" value="UniProtKB-UniRule"/>
</dbReference>
<dbReference type="GO" id="GO:0034220">
    <property type="term" value="P:monoatomic ion transmembrane transport"/>
    <property type="evidence" value="ECO:0007669"/>
    <property type="project" value="UniProtKB-KW"/>
</dbReference>
<dbReference type="GO" id="GO:0039520">
    <property type="term" value="P:symbiont-mediated activation of host autophagy"/>
    <property type="evidence" value="ECO:0007669"/>
    <property type="project" value="UniProtKB-KW"/>
</dbReference>
<dbReference type="GO" id="GO:0016032">
    <property type="term" value="P:viral process"/>
    <property type="evidence" value="ECO:0007669"/>
    <property type="project" value="UniProtKB-UniRule"/>
</dbReference>
<dbReference type="Gene3D" id="1.20.5.430">
    <property type="match status" value="1"/>
</dbReference>
<dbReference type="HAMAP" id="MF_04091">
    <property type="entry name" value="ROTA_NSP4"/>
    <property type="match status" value="1"/>
</dbReference>
<dbReference type="InterPro" id="IPR002107">
    <property type="entry name" value="Rotavirus_NSP4"/>
</dbReference>
<dbReference type="Pfam" id="PF01452">
    <property type="entry name" value="Rota_NSP4"/>
    <property type="match status" value="1"/>
</dbReference>
<dbReference type="SUPFAM" id="SSF58030">
    <property type="entry name" value="Rotavirus nonstructural proteins"/>
    <property type="match status" value="1"/>
</dbReference>
<evidence type="ECO:0000255" key="1">
    <source>
        <dbReference type="HAMAP-Rule" id="MF_04091"/>
    </source>
</evidence>
<accession>Q77Q91</accession>
<keyword id="KW-1072">Activation of host autophagy by virus</keyword>
<keyword id="KW-0106">Calcium</keyword>
<keyword id="KW-0260">Enterotoxin</keyword>
<keyword id="KW-0325">Glycoprotein</keyword>
<keyword id="KW-1038">Host endoplasmic reticulum</keyword>
<keyword id="KW-1043">Host membrane</keyword>
<keyword id="KW-0945">Host-virus interaction</keyword>
<keyword id="KW-0407">Ion channel</keyword>
<keyword id="KW-0406">Ion transport</keyword>
<keyword id="KW-0472">Membrane</keyword>
<keyword id="KW-0479">Metal-binding</keyword>
<keyword id="KW-0964">Secreted</keyword>
<keyword id="KW-0735">Signal-anchor</keyword>
<keyword id="KW-0800">Toxin</keyword>
<keyword id="KW-0812">Transmembrane</keyword>
<keyword id="KW-1133">Transmembrane helix</keyword>
<keyword id="KW-0813">Transport</keyword>
<keyword id="KW-1182">Viral ion channel</keyword>
<keyword id="KW-0843">Virulence</keyword>
<organism>
    <name type="scientific">Rotavirus A (strain RVA/Rabbit/United States/ALA/XXXX/G3P11[14])</name>
    <name type="common">RV-A</name>
    <name type="synonym">Rotavirus A (strain Alabama)</name>
    <dbReference type="NCBI Taxonomy" id="101359"/>
    <lineage>
        <taxon>Viruses</taxon>
        <taxon>Riboviria</taxon>
        <taxon>Orthornavirae</taxon>
        <taxon>Duplornaviricota</taxon>
        <taxon>Resentoviricetes</taxon>
        <taxon>Reovirales</taxon>
        <taxon>Sedoreoviridae</taxon>
        <taxon>Rotavirus</taxon>
        <taxon>Rotavirus A</taxon>
    </lineage>
</organism>
<proteinExistence type="inferred from homology"/>
<sequence>MDKLTDLNYTLSVITLMNSTLHAILEDPGMAYFPYIASVLTVLFTLHKASIPTMKIALKTSRCSYKVIKYCIVTIFNTLLKLAGYKEQITTKDEIEKQMDRVIREMRRQLEMIDKLTTREIEQVELLRRIYDRLTVRKTDEIDMSKEINQKNIRTLDEWENGKNPYEPSEVTASL</sequence>
<name>NSP4_ROTRA</name>
<protein>
    <recommendedName>
        <fullName evidence="1">Non-structural glycoprotein 4</fullName>
        <shortName evidence="1">NSP4</shortName>
    </recommendedName>
    <alternativeName>
        <fullName evidence="1">NCVP5</fullName>
    </alternativeName>
    <alternativeName>
        <fullName evidence="1">NS28</fullName>
    </alternativeName>
</protein>
<reference key="1">
    <citation type="journal article" date="2000" name="Arch. Virol.">
        <title>Species specificity and interspecies relatedness of NSP4 genetic groups by comparative NSP4 sequence analyses of animal rotaviruses.</title>
        <authorList>
            <person name="Ciarlet M."/>
            <person name="Liprandi F."/>
            <person name="Conner M.E."/>
            <person name="Estes M.K."/>
        </authorList>
    </citation>
    <scope>NUCLEOTIDE SEQUENCE [GENOMIC RNA]</scope>
</reference>
<comment type="function">
    <text evidence="1">Plays an essential role in the virus replication cycle by acting as a viroporin. Creates a pore in the host endoplasmic reticulum and as a consequence releases Ca(2+) in the cytoplasm of infected cell. In turn, high levels of cytoplasmic calcium trigger membrane trafficking and transport of viral ER-associated proteins to viroplasms, sites of viral genome replication and immature particle assembly.</text>
</comment>
<comment type="function">
    <text evidence="1">The secreted form acts as an enterotoxin that causes phospholipase C-dependent elevation of the intracellular calcium concentration in host intestinal mucosa cells. Increased concentration of intracellular calcium disrupts the cytoskeleton and the tight junctions, raising the paracellular permeability. Potentiates chloride ion secretion through a calcium ion-dependent signaling pathway, inducing age-dependent diarrhea. To perform this enterotoxigenic role in vivo, NSP4 is released from infected enterocytes in a soluble form capable of diffusing within the intestinal lumen and interacting with host plasma membrane receptors on neighboring epithelial cells such as integrins ITGA1/ITGB1 and ITGA2/ITGB1.</text>
</comment>
<comment type="subunit">
    <text evidence="1">Homotetramer. Interacts with the immature particle in the viroplasm. Interacts with host CAV1, early and late in infection. Interacts with host integrin ITGA1/ITGB1 heterodimer. Interacts with host integrin ITGA2/ITGB1 heterodimer. Interaction with microtubules blocks trafficking to the Golgi apparatus.</text>
</comment>
<comment type="subcellular location">
    <subcellularLocation>
        <location evidence="1">Host rough endoplasmic reticulum membrane</location>
        <topology evidence="1">Single-pass type III membrane protein</topology>
    </subcellularLocation>
    <subcellularLocation>
        <location evidence="1">Host membrane</location>
        <location evidence="1">Host caveola</location>
        <topology evidence="1">Single-pass type III membrane protein</topology>
    </subcellularLocation>
    <subcellularLocation>
        <location evidence="1">Secreted</location>
    </subcellularLocation>
    <text evidence="1">NSP4 also localizes in vesicular structures which contain autophagosomal markers and associate with viroplasms in virus-infected cells. Additionally, a soluble form of glycosylated NSP4 is secreted despite retention of its transmembrane domain.</text>
</comment>
<comment type="domain">
    <text evidence="1">Binds 1 calcium ion per tetramer.</text>
</comment>
<comment type="PTM">
    <text evidence="1">The N-glycosyl content is primarily Man(9)GlcNAc, with a small amount of Man(8)GlcNAc.</text>
</comment>
<comment type="similarity">
    <text evidence="1">Belongs to the rotavirus NSP4 family.</text>
</comment>
<organismHost>
    <name type="scientific">Oryctolagus cuniculus</name>
    <name type="common">Rabbit</name>
    <dbReference type="NCBI Taxonomy" id="9986"/>
</organismHost>